<feature type="chain" id="PRO_1000213878" description="Carbamoyl phosphate synthase large chain">
    <location>
        <begin position="1"/>
        <end position="1101"/>
    </location>
</feature>
<feature type="domain" description="ATP-grasp 1" evidence="1">
    <location>
        <begin position="133"/>
        <end position="328"/>
    </location>
</feature>
<feature type="domain" description="ATP-grasp 2" evidence="1">
    <location>
        <begin position="675"/>
        <end position="866"/>
    </location>
</feature>
<feature type="domain" description="MGS-like" evidence="1">
    <location>
        <begin position="948"/>
        <end position="1093"/>
    </location>
</feature>
<feature type="region of interest" description="Carboxyphosphate synthetic domain" evidence="1">
    <location>
        <begin position="1"/>
        <end position="402"/>
    </location>
</feature>
<feature type="region of interest" description="Oligomerization domain" evidence="1">
    <location>
        <begin position="403"/>
        <end position="544"/>
    </location>
</feature>
<feature type="region of interest" description="Carbamoyl phosphate synthetic domain" evidence="1">
    <location>
        <begin position="545"/>
        <end position="947"/>
    </location>
</feature>
<feature type="region of interest" description="Allosteric domain" evidence="1">
    <location>
        <begin position="948"/>
        <end position="1101"/>
    </location>
</feature>
<feature type="binding site" evidence="1">
    <location>
        <position position="129"/>
    </location>
    <ligand>
        <name>ATP</name>
        <dbReference type="ChEBI" id="CHEBI:30616"/>
        <label>1</label>
    </ligand>
</feature>
<feature type="binding site" evidence="1">
    <location>
        <position position="169"/>
    </location>
    <ligand>
        <name>ATP</name>
        <dbReference type="ChEBI" id="CHEBI:30616"/>
        <label>1</label>
    </ligand>
</feature>
<feature type="binding site" evidence="1">
    <location>
        <position position="175"/>
    </location>
    <ligand>
        <name>ATP</name>
        <dbReference type="ChEBI" id="CHEBI:30616"/>
        <label>1</label>
    </ligand>
</feature>
<feature type="binding site" evidence="1">
    <location>
        <position position="176"/>
    </location>
    <ligand>
        <name>ATP</name>
        <dbReference type="ChEBI" id="CHEBI:30616"/>
        <label>1</label>
    </ligand>
</feature>
<feature type="binding site" evidence="1">
    <location>
        <position position="208"/>
    </location>
    <ligand>
        <name>ATP</name>
        <dbReference type="ChEBI" id="CHEBI:30616"/>
        <label>1</label>
    </ligand>
</feature>
<feature type="binding site" evidence="1">
    <location>
        <position position="210"/>
    </location>
    <ligand>
        <name>ATP</name>
        <dbReference type="ChEBI" id="CHEBI:30616"/>
        <label>1</label>
    </ligand>
</feature>
<feature type="binding site" evidence="1">
    <location>
        <position position="215"/>
    </location>
    <ligand>
        <name>ATP</name>
        <dbReference type="ChEBI" id="CHEBI:30616"/>
        <label>1</label>
    </ligand>
</feature>
<feature type="binding site" evidence="1">
    <location>
        <position position="241"/>
    </location>
    <ligand>
        <name>ATP</name>
        <dbReference type="ChEBI" id="CHEBI:30616"/>
        <label>1</label>
    </ligand>
</feature>
<feature type="binding site" evidence="1">
    <location>
        <position position="242"/>
    </location>
    <ligand>
        <name>ATP</name>
        <dbReference type="ChEBI" id="CHEBI:30616"/>
        <label>1</label>
    </ligand>
</feature>
<feature type="binding site" evidence="1">
    <location>
        <position position="243"/>
    </location>
    <ligand>
        <name>ATP</name>
        <dbReference type="ChEBI" id="CHEBI:30616"/>
        <label>1</label>
    </ligand>
</feature>
<feature type="binding site" evidence="1">
    <location>
        <position position="285"/>
    </location>
    <ligand>
        <name>ATP</name>
        <dbReference type="ChEBI" id="CHEBI:30616"/>
        <label>1</label>
    </ligand>
</feature>
<feature type="binding site" evidence="1">
    <location>
        <position position="285"/>
    </location>
    <ligand>
        <name>Mg(2+)</name>
        <dbReference type="ChEBI" id="CHEBI:18420"/>
        <label>1</label>
    </ligand>
</feature>
<feature type="binding site" evidence="1">
    <location>
        <position position="285"/>
    </location>
    <ligand>
        <name>Mn(2+)</name>
        <dbReference type="ChEBI" id="CHEBI:29035"/>
        <label>1</label>
    </ligand>
</feature>
<feature type="binding site" evidence="1">
    <location>
        <position position="299"/>
    </location>
    <ligand>
        <name>ATP</name>
        <dbReference type="ChEBI" id="CHEBI:30616"/>
        <label>1</label>
    </ligand>
</feature>
<feature type="binding site" evidence="1">
    <location>
        <position position="299"/>
    </location>
    <ligand>
        <name>Mg(2+)</name>
        <dbReference type="ChEBI" id="CHEBI:18420"/>
        <label>1</label>
    </ligand>
</feature>
<feature type="binding site" evidence="1">
    <location>
        <position position="299"/>
    </location>
    <ligand>
        <name>Mg(2+)</name>
        <dbReference type="ChEBI" id="CHEBI:18420"/>
        <label>2</label>
    </ligand>
</feature>
<feature type="binding site" evidence="1">
    <location>
        <position position="299"/>
    </location>
    <ligand>
        <name>Mn(2+)</name>
        <dbReference type="ChEBI" id="CHEBI:29035"/>
        <label>1</label>
    </ligand>
</feature>
<feature type="binding site" evidence="1">
    <location>
        <position position="299"/>
    </location>
    <ligand>
        <name>Mn(2+)</name>
        <dbReference type="ChEBI" id="CHEBI:29035"/>
        <label>2</label>
    </ligand>
</feature>
<feature type="binding site" evidence="1">
    <location>
        <position position="301"/>
    </location>
    <ligand>
        <name>Mg(2+)</name>
        <dbReference type="ChEBI" id="CHEBI:18420"/>
        <label>2</label>
    </ligand>
</feature>
<feature type="binding site" evidence="1">
    <location>
        <position position="301"/>
    </location>
    <ligand>
        <name>Mn(2+)</name>
        <dbReference type="ChEBI" id="CHEBI:29035"/>
        <label>2</label>
    </ligand>
</feature>
<feature type="binding site" evidence="1">
    <location>
        <position position="711"/>
    </location>
    <ligand>
        <name>ATP</name>
        <dbReference type="ChEBI" id="CHEBI:30616"/>
        <label>2</label>
    </ligand>
</feature>
<feature type="binding site" evidence="1">
    <location>
        <position position="750"/>
    </location>
    <ligand>
        <name>ATP</name>
        <dbReference type="ChEBI" id="CHEBI:30616"/>
        <label>2</label>
    </ligand>
</feature>
<feature type="binding site" evidence="1">
    <location>
        <position position="752"/>
    </location>
    <ligand>
        <name>ATP</name>
        <dbReference type="ChEBI" id="CHEBI:30616"/>
        <label>2</label>
    </ligand>
</feature>
<feature type="binding site" evidence="1">
    <location>
        <position position="757"/>
    </location>
    <ligand>
        <name>ATP</name>
        <dbReference type="ChEBI" id="CHEBI:30616"/>
        <label>2</label>
    </ligand>
</feature>
<feature type="binding site" evidence="1">
    <location>
        <position position="782"/>
    </location>
    <ligand>
        <name>ATP</name>
        <dbReference type="ChEBI" id="CHEBI:30616"/>
        <label>2</label>
    </ligand>
</feature>
<feature type="binding site" evidence="1">
    <location>
        <position position="783"/>
    </location>
    <ligand>
        <name>ATP</name>
        <dbReference type="ChEBI" id="CHEBI:30616"/>
        <label>2</label>
    </ligand>
</feature>
<feature type="binding site" evidence="1">
    <location>
        <position position="784"/>
    </location>
    <ligand>
        <name>ATP</name>
        <dbReference type="ChEBI" id="CHEBI:30616"/>
        <label>2</label>
    </ligand>
</feature>
<feature type="binding site" evidence="1">
    <location>
        <position position="785"/>
    </location>
    <ligand>
        <name>ATP</name>
        <dbReference type="ChEBI" id="CHEBI:30616"/>
        <label>2</label>
    </ligand>
</feature>
<feature type="binding site" evidence="1">
    <location>
        <position position="825"/>
    </location>
    <ligand>
        <name>ATP</name>
        <dbReference type="ChEBI" id="CHEBI:30616"/>
        <label>2</label>
    </ligand>
</feature>
<feature type="binding site" evidence="1">
    <location>
        <position position="825"/>
    </location>
    <ligand>
        <name>Mg(2+)</name>
        <dbReference type="ChEBI" id="CHEBI:18420"/>
        <label>3</label>
    </ligand>
</feature>
<feature type="binding site" evidence="1">
    <location>
        <position position="825"/>
    </location>
    <ligand>
        <name>Mn(2+)</name>
        <dbReference type="ChEBI" id="CHEBI:29035"/>
        <label>3</label>
    </ligand>
</feature>
<feature type="binding site" evidence="1">
    <location>
        <position position="837"/>
    </location>
    <ligand>
        <name>ATP</name>
        <dbReference type="ChEBI" id="CHEBI:30616"/>
        <label>2</label>
    </ligand>
</feature>
<feature type="binding site" evidence="1">
    <location>
        <position position="837"/>
    </location>
    <ligand>
        <name>Mg(2+)</name>
        <dbReference type="ChEBI" id="CHEBI:18420"/>
        <label>3</label>
    </ligand>
</feature>
<feature type="binding site" evidence="1">
    <location>
        <position position="837"/>
    </location>
    <ligand>
        <name>Mg(2+)</name>
        <dbReference type="ChEBI" id="CHEBI:18420"/>
        <label>4</label>
    </ligand>
</feature>
<feature type="binding site" evidence="1">
    <location>
        <position position="837"/>
    </location>
    <ligand>
        <name>Mn(2+)</name>
        <dbReference type="ChEBI" id="CHEBI:29035"/>
        <label>3</label>
    </ligand>
</feature>
<feature type="binding site" evidence="1">
    <location>
        <position position="837"/>
    </location>
    <ligand>
        <name>Mn(2+)</name>
        <dbReference type="ChEBI" id="CHEBI:29035"/>
        <label>4</label>
    </ligand>
</feature>
<feature type="binding site" evidence="1">
    <location>
        <position position="839"/>
    </location>
    <ligand>
        <name>Mg(2+)</name>
        <dbReference type="ChEBI" id="CHEBI:18420"/>
        <label>4</label>
    </ligand>
</feature>
<feature type="binding site" evidence="1">
    <location>
        <position position="839"/>
    </location>
    <ligand>
        <name>Mn(2+)</name>
        <dbReference type="ChEBI" id="CHEBI:29035"/>
        <label>4</label>
    </ligand>
</feature>
<reference key="1">
    <citation type="journal article" date="2010" name="J. Bacteriol.">
        <title>Genome sequence of the Fleming strain of Micrococcus luteus, a simple free-living actinobacterium.</title>
        <authorList>
            <person name="Young M."/>
            <person name="Artsatbanov V."/>
            <person name="Beller H.R."/>
            <person name="Chandra G."/>
            <person name="Chater K.F."/>
            <person name="Dover L.G."/>
            <person name="Goh E.B."/>
            <person name="Kahan T."/>
            <person name="Kaprelyants A.S."/>
            <person name="Kyrpides N."/>
            <person name="Lapidus A."/>
            <person name="Lowry S.R."/>
            <person name="Lykidis A."/>
            <person name="Mahillon J."/>
            <person name="Markowitz V."/>
            <person name="Mavromatis K."/>
            <person name="Mukamolova G.V."/>
            <person name="Oren A."/>
            <person name="Rokem J.S."/>
            <person name="Smith M.C."/>
            <person name="Young D.I."/>
            <person name="Greenblatt C.L."/>
        </authorList>
    </citation>
    <scope>NUCLEOTIDE SEQUENCE [LARGE SCALE GENOMIC DNA]</scope>
    <source>
        <strain>ATCC 4698 / DSM 20030 / JCM 1464 / CCM 169 / CCUG 5858 / IAM 1056 / NBRC 3333 / NCIMB 9278 / NCTC 2665 / VKM Ac-2230</strain>
    </source>
</reference>
<organism>
    <name type="scientific">Micrococcus luteus (strain ATCC 4698 / DSM 20030 / JCM 1464 / CCM 169 / CCUG 5858 / IAM 1056 / NBRC 3333 / NCIMB 9278 / NCTC 2665 / VKM Ac-2230)</name>
    <name type="common">Micrococcus lysodeikticus</name>
    <dbReference type="NCBI Taxonomy" id="465515"/>
    <lineage>
        <taxon>Bacteria</taxon>
        <taxon>Bacillati</taxon>
        <taxon>Actinomycetota</taxon>
        <taxon>Actinomycetes</taxon>
        <taxon>Micrococcales</taxon>
        <taxon>Micrococcaceae</taxon>
        <taxon>Micrococcus</taxon>
    </lineage>
</organism>
<accession>C5CCF1</accession>
<sequence>MPKRTDLKSVLVIGSGPIVIGQAAEFDYSGTQAIRVLKEEGVRVVLVNSNPATIMTDPELADATYVEPITPAVVAKIIEKERPDALLPTLGGQTALNTAIALDKDGVLERFGVELIGANIEAIELGENRELFKGVVERAGGESARSHIVHTMEEALAAVEDLKYPVVVRPSFTMGGLGSGMAYDEADLYRICGAGLQYSPTSEVLLEESILGWKEYELEMMRDKNDNVVVVCSIENVDPVGVHTGDSITVAPAMTLTDREYQKLRDISINVIREVGVDTGGCNIQFAVNPVDGRVVVIEMNPRVSRSSALASKATGFAIAKIATKLALGYTMDEIPNDITQKTPASFEPVLDYVVVKVPRFAFEKFPAADPTLTTTMKSVGEAMAIGRNFTEALQKALRSLEQKGSELAFPQDADPQALLAAASTATTDRLSQTQQALYAGATIEEAFEATAIDPWFLDQFVLINEVADEIRDAEVLDEALLRRAKRHGFSDAQIGSLRHMDAAVVRGVRHALGVRPVYKTVDTCAAEFEAFTPYRYSSYDLETEVAPHEGESVIILGSGPNRIGQGIEFDYSCVHATMALREAGYETVMVNCNPETVSTDYDISDRLYFEPLTLEDVLEVIAAEEASGGVRGVFVQLGGQTPLKLAQQLADAGVPILGTSPAAIDLAEHRGEFALVLERAGLVAPKNGTAVSFDDAKRVADEIGYPVLVRPSYVLGGRGMEIVYSEEALAHYVAHATEITPDQPMLVDRFLEDAIEIDVDALYDGTELYLGGVMEHIEEAGIHSGDSACVLPPVTLGPDVLERVHRATERIAAGVGVRGLINIQFALASDVLYVIEANPRASRTVPFVSKATGVQLAKAAARIGVGESIADLRAAGMLPTAYDGGTLPIGAPVAVKEAVLPFTRFRTAEGRVVDSLLGPEMRSTGEVMGIDKHFDTAFAKSQSAAGGPLPTSGRVFVSVANRDKRTLVGQAKRLVDLGFQVVSTGGTAEVLRRNGIPAEVVAKIADAGHEDGAGTVLEQLHAGTVDLVLNTPSGGDARTDGYEIRAAATSLGVPVITTTAEFGACLQAIEAMRSYEWSVTSLQEHDARLQQAVAGPEAAA</sequence>
<dbReference type="EC" id="6.3.4.16" evidence="1"/>
<dbReference type="EC" id="6.3.5.5" evidence="1"/>
<dbReference type="EMBL" id="CP001628">
    <property type="protein sequence ID" value="ACS30763.1"/>
    <property type="molecule type" value="Genomic_DNA"/>
</dbReference>
<dbReference type="RefSeq" id="WP_010078599.1">
    <property type="nucleotide sequence ID" value="NZ_WBMF01000005.1"/>
</dbReference>
<dbReference type="SMR" id="C5CCF1"/>
<dbReference type="STRING" id="465515.Mlut_12580"/>
<dbReference type="EnsemblBacteria" id="ACS30763">
    <property type="protein sequence ID" value="ACS30763"/>
    <property type="gene ID" value="Mlut_12580"/>
</dbReference>
<dbReference type="GeneID" id="93345414"/>
<dbReference type="KEGG" id="mlu:Mlut_12580"/>
<dbReference type="eggNOG" id="COG0458">
    <property type="taxonomic scope" value="Bacteria"/>
</dbReference>
<dbReference type="HOGENOM" id="CLU_000513_1_0_11"/>
<dbReference type="UniPathway" id="UPA00068">
    <property type="reaction ID" value="UER00171"/>
</dbReference>
<dbReference type="UniPathway" id="UPA00070">
    <property type="reaction ID" value="UER00115"/>
</dbReference>
<dbReference type="Proteomes" id="UP000000738">
    <property type="component" value="Chromosome"/>
</dbReference>
<dbReference type="GO" id="GO:0005737">
    <property type="term" value="C:cytoplasm"/>
    <property type="evidence" value="ECO:0007669"/>
    <property type="project" value="TreeGrafter"/>
</dbReference>
<dbReference type="GO" id="GO:0005524">
    <property type="term" value="F:ATP binding"/>
    <property type="evidence" value="ECO:0007669"/>
    <property type="project" value="UniProtKB-UniRule"/>
</dbReference>
<dbReference type="GO" id="GO:0004087">
    <property type="term" value="F:carbamoyl-phosphate synthase (ammonia) activity"/>
    <property type="evidence" value="ECO:0007669"/>
    <property type="project" value="RHEA"/>
</dbReference>
<dbReference type="GO" id="GO:0004088">
    <property type="term" value="F:carbamoyl-phosphate synthase (glutamine-hydrolyzing) activity"/>
    <property type="evidence" value="ECO:0007669"/>
    <property type="project" value="UniProtKB-UniRule"/>
</dbReference>
<dbReference type="GO" id="GO:0046872">
    <property type="term" value="F:metal ion binding"/>
    <property type="evidence" value="ECO:0007669"/>
    <property type="project" value="UniProtKB-KW"/>
</dbReference>
<dbReference type="GO" id="GO:0044205">
    <property type="term" value="P:'de novo' UMP biosynthetic process"/>
    <property type="evidence" value="ECO:0007669"/>
    <property type="project" value="UniProtKB-UniRule"/>
</dbReference>
<dbReference type="GO" id="GO:0006541">
    <property type="term" value="P:glutamine metabolic process"/>
    <property type="evidence" value="ECO:0007669"/>
    <property type="project" value="TreeGrafter"/>
</dbReference>
<dbReference type="GO" id="GO:0006526">
    <property type="term" value="P:L-arginine biosynthetic process"/>
    <property type="evidence" value="ECO:0007669"/>
    <property type="project" value="UniProtKB-UniRule"/>
</dbReference>
<dbReference type="CDD" id="cd01424">
    <property type="entry name" value="MGS_CPS_II"/>
    <property type="match status" value="1"/>
</dbReference>
<dbReference type="FunFam" id="1.10.1030.10:FF:000002">
    <property type="entry name" value="Carbamoyl-phosphate synthase large chain"/>
    <property type="match status" value="1"/>
</dbReference>
<dbReference type="FunFam" id="3.30.1490.20:FF:000001">
    <property type="entry name" value="Carbamoyl-phosphate synthase large chain"/>
    <property type="match status" value="1"/>
</dbReference>
<dbReference type="FunFam" id="3.30.470.20:FF:000007">
    <property type="entry name" value="Carbamoyl-phosphate synthase large chain"/>
    <property type="match status" value="1"/>
</dbReference>
<dbReference type="FunFam" id="3.30.470.20:FF:000014">
    <property type="entry name" value="Carbamoyl-phosphate synthase large chain"/>
    <property type="match status" value="1"/>
</dbReference>
<dbReference type="FunFam" id="3.40.50.20:FF:000001">
    <property type="entry name" value="Carbamoyl-phosphate synthase large chain"/>
    <property type="match status" value="1"/>
</dbReference>
<dbReference type="FunFam" id="3.40.50.20:FF:000003">
    <property type="entry name" value="Carbamoyl-phosphate synthase large chain"/>
    <property type="match status" value="1"/>
</dbReference>
<dbReference type="Gene3D" id="3.40.50.20">
    <property type="match status" value="2"/>
</dbReference>
<dbReference type="Gene3D" id="3.30.1490.20">
    <property type="entry name" value="ATP-grasp fold, A domain"/>
    <property type="match status" value="1"/>
</dbReference>
<dbReference type="Gene3D" id="3.30.470.20">
    <property type="entry name" value="ATP-grasp fold, B domain"/>
    <property type="match status" value="2"/>
</dbReference>
<dbReference type="Gene3D" id="1.10.1030.10">
    <property type="entry name" value="Carbamoyl-phosphate synthetase, large subunit oligomerisation domain"/>
    <property type="match status" value="1"/>
</dbReference>
<dbReference type="Gene3D" id="3.40.50.1380">
    <property type="entry name" value="Methylglyoxal synthase-like domain"/>
    <property type="match status" value="1"/>
</dbReference>
<dbReference type="HAMAP" id="MF_01210_B">
    <property type="entry name" value="CPSase_L_chain_B"/>
    <property type="match status" value="1"/>
</dbReference>
<dbReference type="InterPro" id="IPR011761">
    <property type="entry name" value="ATP-grasp"/>
</dbReference>
<dbReference type="InterPro" id="IPR013815">
    <property type="entry name" value="ATP_grasp_subdomain_1"/>
</dbReference>
<dbReference type="InterPro" id="IPR006275">
    <property type="entry name" value="CarbamoylP_synth_lsu"/>
</dbReference>
<dbReference type="InterPro" id="IPR005480">
    <property type="entry name" value="CarbamoylP_synth_lsu_oligo"/>
</dbReference>
<dbReference type="InterPro" id="IPR036897">
    <property type="entry name" value="CarbamoylP_synth_lsu_oligo_sf"/>
</dbReference>
<dbReference type="InterPro" id="IPR005479">
    <property type="entry name" value="CbamoylP_synth_lsu-like_ATP-bd"/>
</dbReference>
<dbReference type="InterPro" id="IPR005483">
    <property type="entry name" value="CbamoylP_synth_lsu_CPSase_dom"/>
</dbReference>
<dbReference type="InterPro" id="IPR011607">
    <property type="entry name" value="MGS-like_dom"/>
</dbReference>
<dbReference type="InterPro" id="IPR036914">
    <property type="entry name" value="MGS-like_dom_sf"/>
</dbReference>
<dbReference type="InterPro" id="IPR033937">
    <property type="entry name" value="MGS_CPS_CarB"/>
</dbReference>
<dbReference type="InterPro" id="IPR016185">
    <property type="entry name" value="PreATP-grasp_dom_sf"/>
</dbReference>
<dbReference type="NCBIfam" id="TIGR01369">
    <property type="entry name" value="CPSaseII_lrg"/>
    <property type="match status" value="1"/>
</dbReference>
<dbReference type="NCBIfam" id="NF003671">
    <property type="entry name" value="PRK05294.1"/>
    <property type="match status" value="1"/>
</dbReference>
<dbReference type="NCBIfam" id="NF009455">
    <property type="entry name" value="PRK12815.1"/>
    <property type="match status" value="1"/>
</dbReference>
<dbReference type="PANTHER" id="PTHR11405:SF53">
    <property type="entry name" value="CARBAMOYL-PHOSPHATE SYNTHASE [AMMONIA], MITOCHONDRIAL"/>
    <property type="match status" value="1"/>
</dbReference>
<dbReference type="PANTHER" id="PTHR11405">
    <property type="entry name" value="CARBAMOYLTRANSFERASE FAMILY MEMBER"/>
    <property type="match status" value="1"/>
</dbReference>
<dbReference type="Pfam" id="PF02786">
    <property type="entry name" value="CPSase_L_D2"/>
    <property type="match status" value="2"/>
</dbReference>
<dbReference type="Pfam" id="PF02787">
    <property type="entry name" value="CPSase_L_D3"/>
    <property type="match status" value="1"/>
</dbReference>
<dbReference type="Pfam" id="PF02142">
    <property type="entry name" value="MGS"/>
    <property type="match status" value="1"/>
</dbReference>
<dbReference type="PRINTS" id="PR00098">
    <property type="entry name" value="CPSASE"/>
</dbReference>
<dbReference type="SMART" id="SM01096">
    <property type="entry name" value="CPSase_L_D3"/>
    <property type="match status" value="1"/>
</dbReference>
<dbReference type="SMART" id="SM00851">
    <property type="entry name" value="MGS"/>
    <property type="match status" value="1"/>
</dbReference>
<dbReference type="SUPFAM" id="SSF48108">
    <property type="entry name" value="Carbamoyl phosphate synthetase, large subunit connection domain"/>
    <property type="match status" value="1"/>
</dbReference>
<dbReference type="SUPFAM" id="SSF56059">
    <property type="entry name" value="Glutathione synthetase ATP-binding domain-like"/>
    <property type="match status" value="2"/>
</dbReference>
<dbReference type="SUPFAM" id="SSF52335">
    <property type="entry name" value="Methylglyoxal synthase-like"/>
    <property type="match status" value="1"/>
</dbReference>
<dbReference type="SUPFAM" id="SSF52440">
    <property type="entry name" value="PreATP-grasp domain"/>
    <property type="match status" value="2"/>
</dbReference>
<dbReference type="PROSITE" id="PS50975">
    <property type="entry name" value="ATP_GRASP"/>
    <property type="match status" value="2"/>
</dbReference>
<dbReference type="PROSITE" id="PS00866">
    <property type="entry name" value="CPSASE_1"/>
    <property type="match status" value="2"/>
</dbReference>
<dbReference type="PROSITE" id="PS00867">
    <property type="entry name" value="CPSASE_2"/>
    <property type="match status" value="2"/>
</dbReference>
<dbReference type="PROSITE" id="PS51855">
    <property type="entry name" value="MGS"/>
    <property type="match status" value="1"/>
</dbReference>
<proteinExistence type="inferred from homology"/>
<comment type="function">
    <text evidence="1">Large subunit of the glutamine-dependent carbamoyl phosphate synthetase (CPSase). CPSase catalyzes the formation of carbamoyl phosphate from the ammonia moiety of glutamine, carbonate, and phosphate donated by ATP, constituting the first step of 2 biosynthetic pathways, one leading to arginine and/or urea and the other to pyrimidine nucleotides. The large subunit (synthetase) binds the substrates ammonia (free or transferred from glutamine from the small subunit), hydrogencarbonate and ATP and carries out an ATP-coupled ligase reaction, activating hydrogencarbonate by forming carboxy phosphate which reacts with ammonia to form carbamoyl phosphate.</text>
</comment>
<comment type="catalytic activity">
    <reaction evidence="1">
        <text>hydrogencarbonate + L-glutamine + 2 ATP + H2O = carbamoyl phosphate + L-glutamate + 2 ADP + phosphate + 2 H(+)</text>
        <dbReference type="Rhea" id="RHEA:18633"/>
        <dbReference type="ChEBI" id="CHEBI:15377"/>
        <dbReference type="ChEBI" id="CHEBI:15378"/>
        <dbReference type="ChEBI" id="CHEBI:17544"/>
        <dbReference type="ChEBI" id="CHEBI:29985"/>
        <dbReference type="ChEBI" id="CHEBI:30616"/>
        <dbReference type="ChEBI" id="CHEBI:43474"/>
        <dbReference type="ChEBI" id="CHEBI:58228"/>
        <dbReference type="ChEBI" id="CHEBI:58359"/>
        <dbReference type="ChEBI" id="CHEBI:456216"/>
        <dbReference type="EC" id="6.3.5.5"/>
    </reaction>
</comment>
<comment type="catalytic activity">
    <molecule>Carbamoyl phosphate synthase large chain</molecule>
    <reaction evidence="1">
        <text>hydrogencarbonate + NH4(+) + 2 ATP = carbamoyl phosphate + 2 ADP + phosphate + 2 H(+)</text>
        <dbReference type="Rhea" id="RHEA:18029"/>
        <dbReference type="ChEBI" id="CHEBI:15378"/>
        <dbReference type="ChEBI" id="CHEBI:17544"/>
        <dbReference type="ChEBI" id="CHEBI:28938"/>
        <dbReference type="ChEBI" id="CHEBI:30616"/>
        <dbReference type="ChEBI" id="CHEBI:43474"/>
        <dbReference type="ChEBI" id="CHEBI:58228"/>
        <dbReference type="ChEBI" id="CHEBI:456216"/>
        <dbReference type="EC" id="6.3.4.16"/>
    </reaction>
</comment>
<comment type="cofactor">
    <cofactor evidence="1">
        <name>Mg(2+)</name>
        <dbReference type="ChEBI" id="CHEBI:18420"/>
    </cofactor>
    <cofactor evidence="1">
        <name>Mn(2+)</name>
        <dbReference type="ChEBI" id="CHEBI:29035"/>
    </cofactor>
    <text evidence="1">Binds 4 Mg(2+) or Mn(2+) ions per subunit.</text>
</comment>
<comment type="pathway">
    <text evidence="1">Amino-acid biosynthesis; L-arginine biosynthesis; carbamoyl phosphate from bicarbonate: step 1/1.</text>
</comment>
<comment type="pathway">
    <text evidence="1">Pyrimidine metabolism; UMP biosynthesis via de novo pathway; (S)-dihydroorotate from bicarbonate: step 1/3.</text>
</comment>
<comment type="subunit">
    <text evidence="1">Composed of two chains; the small (or glutamine) chain promotes the hydrolysis of glutamine to ammonia, which is used by the large (or ammonia) chain to synthesize carbamoyl phosphate. Tetramer of heterodimers (alpha,beta)4.</text>
</comment>
<comment type="domain">
    <text evidence="1">The large subunit is composed of 2 ATP-grasp domains that are involved in binding the 2 ATP molecules needed for carbamoyl phosphate synthesis. The N-terminal ATP-grasp domain (referred to as the carboxyphosphate synthetic component) catalyzes the ATP-dependent phosphorylation of hydrogencarbonate to carboxyphosphate and the subsequent nucleophilic attack by ammonia to form a carbamate intermediate. The C-terminal ATP-grasp domain (referred to as the carbamoyl phosphate synthetic component) then catalyzes the phosphorylation of carbamate with the second ATP to form the end product carbamoyl phosphate. The reactive and unstable enzyme intermediates are sequentially channeled from one active site to the next through the interior of the protein over a distance of at least 96 A.</text>
</comment>
<comment type="similarity">
    <text evidence="1">Belongs to the CarB family.</text>
</comment>
<evidence type="ECO:0000255" key="1">
    <source>
        <dbReference type="HAMAP-Rule" id="MF_01210"/>
    </source>
</evidence>
<keyword id="KW-0028">Amino-acid biosynthesis</keyword>
<keyword id="KW-0055">Arginine biosynthesis</keyword>
<keyword id="KW-0067">ATP-binding</keyword>
<keyword id="KW-0436">Ligase</keyword>
<keyword id="KW-0460">Magnesium</keyword>
<keyword id="KW-0464">Manganese</keyword>
<keyword id="KW-0479">Metal-binding</keyword>
<keyword id="KW-0547">Nucleotide-binding</keyword>
<keyword id="KW-0665">Pyrimidine biosynthesis</keyword>
<keyword id="KW-1185">Reference proteome</keyword>
<keyword id="KW-0677">Repeat</keyword>
<protein>
    <recommendedName>
        <fullName evidence="1">Carbamoyl phosphate synthase large chain</fullName>
        <ecNumber evidence="1">6.3.4.16</ecNumber>
        <ecNumber evidence="1">6.3.5.5</ecNumber>
    </recommendedName>
    <alternativeName>
        <fullName evidence="1">Carbamoyl phosphate synthetase ammonia chain</fullName>
    </alternativeName>
</protein>
<name>CARB_MICLC</name>
<gene>
    <name evidence="1" type="primary">carB</name>
    <name type="ordered locus">Mlut_12580</name>
</gene>